<name>RL33_ENT38</name>
<feature type="chain" id="PRO_1000059276" description="Large ribosomal subunit protein bL33">
    <location>
        <begin position="1"/>
        <end position="55"/>
    </location>
</feature>
<accession>A4W513</accession>
<comment type="similarity">
    <text evidence="1">Belongs to the bacterial ribosomal protein bL33 family.</text>
</comment>
<sequence>MAKGIREKIKLVSSAGTGHFYTTTKNKRTKPEKLELKKFDPVVRQHVLYKEAKIK</sequence>
<proteinExistence type="inferred from homology"/>
<keyword id="KW-0687">Ribonucleoprotein</keyword>
<keyword id="KW-0689">Ribosomal protein</keyword>
<gene>
    <name evidence="1" type="primary">rpmG</name>
    <name type="ordered locus">Ent638_0103</name>
</gene>
<dbReference type="EMBL" id="CP000653">
    <property type="protein sequence ID" value="ABP58793.1"/>
    <property type="molecule type" value="Genomic_DNA"/>
</dbReference>
<dbReference type="RefSeq" id="WP_003024094.1">
    <property type="nucleotide sequence ID" value="NC_009436.1"/>
</dbReference>
<dbReference type="SMR" id="A4W513"/>
<dbReference type="STRING" id="399742.Ent638_0103"/>
<dbReference type="GeneID" id="98390706"/>
<dbReference type="KEGG" id="ent:Ent638_0103"/>
<dbReference type="eggNOG" id="COG0267">
    <property type="taxonomic scope" value="Bacteria"/>
</dbReference>
<dbReference type="HOGENOM" id="CLU_190949_1_1_6"/>
<dbReference type="OrthoDB" id="21586at2"/>
<dbReference type="Proteomes" id="UP000000230">
    <property type="component" value="Chromosome"/>
</dbReference>
<dbReference type="GO" id="GO:0022625">
    <property type="term" value="C:cytosolic large ribosomal subunit"/>
    <property type="evidence" value="ECO:0007669"/>
    <property type="project" value="TreeGrafter"/>
</dbReference>
<dbReference type="GO" id="GO:0003735">
    <property type="term" value="F:structural constituent of ribosome"/>
    <property type="evidence" value="ECO:0007669"/>
    <property type="project" value="InterPro"/>
</dbReference>
<dbReference type="GO" id="GO:0006412">
    <property type="term" value="P:translation"/>
    <property type="evidence" value="ECO:0007669"/>
    <property type="project" value="UniProtKB-UniRule"/>
</dbReference>
<dbReference type="FunFam" id="2.20.28.120:FF:000001">
    <property type="entry name" value="50S ribosomal protein L33"/>
    <property type="match status" value="1"/>
</dbReference>
<dbReference type="Gene3D" id="2.20.28.120">
    <property type="entry name" value="Ribosomal protein L33"/>
    <property type="match status" value="1"/>
</dbReference>
<dbReference type="HAMAP" id="MF_00294">
    <property type="entry name" value="Ribosomal_bL33"/>
    <property type="match status" value="1"/>
</dbReference>
<dbReference type="InterPro" id="IPR001705">
    <property type="entry name" value="Ribosomal_bL33"/>
</dbReference>
<dbReference type="InterPro" id="IPR018264">
    <property type="entry name" value="Ribosomal_bL33_CS"/>
</dbReference>
<dbReference type="InterPro" id="IPR038584">
    <property type="entry name" value="Ribosomal_bL33_sf"/>
</dbReference>
<dbReference type="InterPro" id="IPR011332">
    <property type="entry name" value="Ribosomal_zn-bd"/>
</dbReference>
<dbReference type="NCBIfam" id="NF001860">
    <property type="entry name" value="PRK00595.1"/>
    <property type="match status" value="1"/>
</dbReference>
<dbReference type="NCBIfam" id="TIGR01023">
    <property type="entry name" value="rpmG_bact"/>
    <property type="match status" value="1"/>
</dbReference>
<dbReference type="PANTHER" id="PTHR15238">
    <property type="entry name" value="54S RIBOSOMAL PROTEIN L39, MITOCHONDRIAL"/>
    <property type="match status" value="1"/>
</dbReference>
<dbReference type="PANTHER" id="PTHR15238:SF1">
    <property type="entry name" value="LARGE RIBOSOMAL SUBUNIT PROTEIN BL33M"/>
    <property type="match status" value="1"/>
</dbReference>
<dbReference type="Pfam" id="PF00471">
    <property type="entry name" value="Ribosomal_L33"/>
    <property type="match status" value="1"/>
</dbReference>
<dbReference type="SUPFAM" id="SSF57829">
    <property type="entry name" value="Zn-binding ribosomal proteins"/>
    <property type="match status" value="1"/>
</dbReference>
<dbReference type="PROSITE" id="PS00582">
    <property type="entry name" value="RIBOSOMAL_L33"/>
    <property type="match status" value="1"/>
</dbReference>
<organism>
    <name type="scientific">Enterobacter sp. (strain 638)</name>
    <dbReference type="NCBI Taxonomy" id="399742"/>
    <lineage>
        <taxon>Bacteria</taxon>
        <taxon>Pseudomonadati</taxon>
        <taxon>Pseudomonadota</taxon>
        <taxon>Gammaproteobacteria</taxon>
        <taxon>Enterobacterales</taxon>
        <taxon>Enterobacteriaceae</taxon>
        <taxon>Enterobacter</taxon>
    </lineage>
</organism>
<reference key="1">
    <citation type="journal article" date="2010" name="PLoS Genet.">
        <title>Genome sequence of the plant growth promoting endophytic bacterium Enterobacter sp. 638.</title>
        <authorList>
            <person name="Taghavi S."/>
            <person name="van der Lelie D."/>
            <person name="Hoffman A."/>
            <person name="Zhang Y.B."/>
            <person name="Walla M.D."/>
            <person name="Vangronsveld J."/>
            <person name="Newman L."/>
            <person name="Monchy S."/>
        </authorList>
    </citation>
    <scope>NUCLEOTIDE SEQUENCE [LARGE SCALE GENOMIC DNA]</scope>
    <source>
        <strain>638</strain>
    </source>
</reference>
<protein>
    <recommendedName>
        <fullName evidence="1">Large ribosomal subunit protein bL33</fullName>
    </recommendedName>
    <alternativeName>
        <fullName evidence="2">50S ribosomal protein L33</fullName>
    </alternativeName>
</protein>
<evidence type="ECO:0000255" key="1">
    <source>
        <dbReference type="HAMAP-Rule" id="MF_00294"/>
    </source>
</evidence>
<evidence type="ECO:0000305" key="2"/>